<gene>
    <name evidence="2" type="primary">yihY</name>
    <name type="ordered locus">c4833</name>
</gene>
<dbReference type="EMBL" id="AE014075">
    <property type="protein sequence ID" value="AAN83262.1"/>
    <property type="molecule type" value="Genomic_DNA"/>
</dbReference>
<dbReference type="RefSeq" id="WP_000920762.1">
    <property type="nucleotide sequence ID" value="NZ_CP051263.1"/>
</dbReference>
<dbReference type="STRING" id="199310.c4833"/>
<dbReference type="KEGG" id="ecc:c4833"/>
<dbReference type="eggNOG" id="COG1295">
    <property type="taxonomic scope" value="Bacteria"/>
</dbReference>
<dbReference type="HOGENOM" id="CLU_032288_0_0_6"/>
<dbReference type="BioCyc" id="ECOL199310:C4833-MONOMER"/>
<dbReference type="Proteomes" id="UP000001410">
    <property type="component" value="Chromosome"/>
</dbReference>
<dbReference type="GO" id="GO:0005886">
    <property type="term" value="C:plasma membrane"/>
    <property type="evidence" value="ECO:0007669"/>
    <property type="project" value="UniProtKB-SubCell"/>
</dbReference>
<dbReference type="HAMAP" id="MF_00672">
    <property type="entry name" value="UPF0761"/>
    <property type="match status" value="1"/>
</dbReference>
<dbReference type="InterPro" id="IPR023679">
    <property type="entry name" value="UPF0761_bac"/>
</dbReference>
<dbReference type="InterPro" id="IPR017039">
    <property type="entry name" value="Virul_fac_BrkB"/>
</dbReference>
<dbReference type="NCBIfam" id="NF002457">
    <property type="entry name" value="PRK01637.1"/>
    <property type="match status" value="1"/>
</dbReference>
<dbReference type="NCBIfam" id="TIGR00765">
    <property type="entry name" value="yihY_not_rbn"/>
    <property type="match status" value="1"/>
</dbReference>
<dbReference type="PANTHER" id="PTHR30213">
    <property type="entry name" value="INNER MEMBRANE PROTEIN YHJD"/>
    <property type="match status" value="1"/>
</dbReference>
<dbReference type="PANTHER" id="PTHR30213:SF0">
    <property type="entry name" value="UPF0761 MEMBRANE PROTEIN YIHY"/>
    <property type="match status" value="1"/>
</dbReference>
<dbReference type="Pfam" id="PF03631">
    <property type="entry name" value="Virul_fac_BrkB"/>
    <property type="match status" value="1"/>
</dbReference>
<dbReference type="PIRSF" id="PIRSF035875">
    <property type="entry name" value="RNase_BN"/>
    <property type="match status" value="1"/>
</dbReference>
<reference key="1">
    <citation type="journal article" date="2002" name="Proc. Natl. Acad. Sci. U.S.A.">
        <title>Extensive mosaic structure revealed by the complete genome sequence of uropathogenic Escherichia coli.</title>
        <authorList>
            <person name="Welch R.A."/>
            <person name="Burland V."/>
            <person name="Plunkett G. III"/>
            <person name="Redford P."/>
            <person name="Roesch P."/>
            <person name="Rasko D."/>
            <person name="Buckles E.L."/>
            <person name="Liou S.-R."/>
            <person name="Boutin A."/>
            <person name="Hackett J."/>
            <person name="Stroud D."/>
            <person name="Mayhew G.F."/>
            <person name="Rose D.J."/>
            <person name="Zhou S."/>
            <person name="Schwartz D.C."/>
            <person name="Perna N.T."/>
            <person name="Mobley H.L.T."/>
            <person name="Donnenberg M.S."/>
            <person name="Blattner F.R."/>
        </authorList>
    </citation>
    <scope>NUCLEOTIDE SEQUENCE [LARGE SCALE GENOMIC DNA]</scope>
    <source>
        <strain>CFT073 / ATCC 700928 / UPEC</strain>
    </source>
</reference>
<proteinExistence type="inferred from homology"/>
<feature type="chain" id="PRO_0000200983" description="UPF0761 membrane protein YihY">
    <location>
        <begin position="1"/>
        <end position="290"/>
    </location>
</feature>
<feature type="topological domain" description="Cytoplasmic" evidence="1">
    <location>
        <begin position="1"/>
        <end position="43"/>
    </location>
</feature>
<feature type="transmembrane region" description="Helical" evidence="2">
    <location>
        <begin position="44"/>
        <end position="64"/>
    </location>
</feature>
<feature type="topological domain" description="Periplasmic" evidence="1">
    <location>
        <begin position="65"/>
        <end position="103"/>
    </location>
</feature>
<feature type="transmembrane region" description="Helical" evidence="2">
    <location>
        <begin position="104"/>
        <end position="124"/>
    </location>
</feature>
<feature type="topological domain" description="Cytoplasmic" evidence="1">
    <location>
        <begin position="125"/>
        <end position="139"/>
    </location>
</feature>
<feature type="transmembrane region" description="Helical" evidence="2">
    <location>
        <begin position="140"/>
        <end position="160"/>
    </location>
</feature>
<feature type="topological domain" description="Periplasmic" evidence="1">
    <location>
        <begin position="161"/>
        <end position="182"/>
    </location>
</feature>
<feature type="transmembrane region" description="Helical" evidence="2">
    <location>
        <begin position="183"/>
        <end position="203"/>
    </location>
</feature>
<feature type="topological domain" description="Cytoplasmic" evidence="1">
    <location>
        <begin position="204"/>
        <end position="209"/>
    </location>
</feature>
<feature type="transmembrane region" description="Helical" evidence="2">
    <location>
        <begin position="210"/>
        <end position="230"/>
    </location>
</feature>
<feature type="topological domain" description="Periplasmic" evidence="1">
    <location>
        <begin position="231"/>
        <end position="243"/>
    </location>
</feature>
<feature type="transmembrane region" description="Helical" evidence="2">
    <location>
        <begin position="244"/>
        <end position="264"/>
    </location>
</feature>
<feature type="topological domain" description="Cytoplasmic" evidence="1">
    <location>
        <begin position="265"/>
        <end position="290"/>
    </location>
</feature>
<organism>
    <name type="scientific">Escherichia coli O6:H1 (strain CFT073 / ATCC 700928 / UPEC)</name>
    <dbReference type="NCBI Taxonomy" id="199310"/>
    <lineage>
        <taxon>Bacteria</taxon>
        <taxon>Pseudomonadati</taxon>
        <taxon>Pseudomonadota</taxon>
        <taxon>Gammaproteobacteria</taxon>
        <taxon>Enterobacterales</taxon>
        <taxon>Enterobacteriaceae</taxon>
        <taxon>Escherichia</taxon>
    </lineage>
</organism>
<sequence length="290" mass="32839">MLKTIQDKARHRTRPLWAWLKLLWQRIDEDNMTTLAGNLAYVSLLSLVPLVAVVFALFAAFPMFSDVSIQLRHFIFANFLPATGDVIQRYIEQFVANSNKMTAVGACGLIVTALLLMYSIDSALNTIWRSKRARPKIYSFAVYWMILTLGPLLAGASLAISSYLLSLRWASDLNTVIDNVLRIFPLLLSWISFWLLYSIVPTIRVPNRDAIVGAFVAALLFEAGKKGFALYITMFPSYQLIYGVLAVIPILFVWVYWTWCIVLLGAEITVTLGEYRKLKQAAEQEEDDEP</sequence>
<comment type="subcellular location">
    <subcellularLocation>
        <location evidence="2">Cell inner membrane</location>
        <topology evidence="2">Multi-pass membrane protein</topology>
    </subcellularLocation>
</comment>
<comment type="similarity">
    <text evidence="2">Belongs to the UPF0761 family.</text>
</comment>
<name>YIHY_ECOL6</name>
<keyword id="KW-0997">Cell inner membrane</keyword>
<keyword id="KW-1003">Cell membrane</keyword>
<keyword id="KW-0472">Membrane</keyword>
<keyword id="KW-1185">Reference proteome</keyword>
<keyword id="KW-0812">Transmembrane</keyword>
<keyword id="KW-1133">Transmembrane helix</keyword>
<protein>
    <recommendedName>
        <fullName evidence="2">UPF0761 membrane protein YihY</fullName>
    </recommendedName>
</protein>
<accession>P0A8K9</accession>
<accession>P32146</accession>
<evidence type="ECO:0000255" key="1"/>
<evidence type="ECO:0000255" key="2">
    <source>
        <dbReference type="HAMAP-Rule" id="MF_00672"/>
    </source>
</evidence>